<feature type="chain" id="PRO_0000379194" description="ATP-dependent helicase/deoxyribonuclease subunit B">
    <location>
        <begin position="1"/>
        <end position="1157"/>
    </location>
</feature>
<feature type="domain" description="UvrD-like helicase ATP-binding" evidence="1">
    <location>
        <begin position="1"/>
        <end position="277"/>
    </location>
</feature>
<feature type="domain" description="UvrD-like helicase C-terminal" evidence="1">
    <location>
        <begin position="271"/>
        <end position="590"/>
    </location>
</feature>
<feature type="binding site" evidence="1">
    <location>
        <begin position="8"/>
        <end position="15"/>
    </location>
    <ligand>
        <name>ATP</name>
        <dbReference type="ChEBI" id="CHEBI:30616"/>
    </ligand>
</feature>
<feature type="binding site" evidence="1">
    <location>
        <position position="794"/>
    </location>
    <ligand>
        <name>[4Fe-4S] cluster</name>
        <dbReference type="ChEBI" id="CHEBI:49883"/>
    </ligand>
</feature>
<feature type="binding site" evidence="1">
    <location>
        <position position="1115"/>
    </location>
    <ligand>
        <name>[4Fe-4S] cluster</name>
        <dbReference type="ChEBI" id="CHEBI:49883"/>
    </ligand>
</feature>
<feature type="binding site" evidence="1">
    <location>
        <position position="1118"/>
    </location>
    <ligand>
        <name>[4Fe-4S] cluster</name>
        <dbReference type="ChEBI" id="CHEBI:49883"/>
    </ligand>
</feature>
<feature type="binding site" evidence="1">
    <location>
        <position position="1124"/>
    </location>
    <ligand>
        <name>[4Fe-4S] cluster</name>
        <dbReference type="ChEBI" id="CHEBI:49883"/>
    </ligand>
</feature>
<evidence type="ECO:0000255" key="1">
    <source>
        <dbReference type="HAMAP-Rule" id="MF_01452"/>
    </source>
</evidence>
<protein>
    <recommendedName>
        <fullName evidence="1">ATP-dependent helicase/deoxyribonuclease subunit B</fullName>
        <ecNumber evidence="1">3.1.-.-</ecNumber>
    </recommendedName>
    <alternativeName>
        <fullName evidence="1">ATP-dependent helicase/nuclease subunit AddB</fullName>
    </alternativeName>
</protein>
<dbReference type="EC" id="3.1.-.-" evidence="1"/>
<dbReference type="EMBL" id="AL596172">
    <property type="protein sequence ID" value="CAC97596.1"/>
    <property type="molecule type" value="Genomic_DNA"/>
</dbReference>
<dbReference type="PIR" id="AD1728">
    <property type="entry name" value="AD1728"/>
</dbReference>
<dbReference type="RefSeq" id="WP_010991145.1">
    <property type="nucleotide sequence ID" value="NC_003212.1"/>
</dbReference>
<dbReference type="SMR" id="Q929A8"/>
<dbReference type="STRING" id="272626.gene:17566730"/>
<dbReference type="KEGG" id="lin:addB"/>
<dbReference type="eggNOG" id="COG3857">
    <property type="taxonomic scope" value="Bacteria"/>
</dbReference>
<dbReference type="HOGENOM" id="CLU_007838_0_0_9"/>
<dbReference type="OrthoDB" id="9758506at2"/>
<dbReference type="Proteomes" id="UP000002513">
    <property type="component" value="Chromosome"/>
</dbReference>
<dbReference type="GO" id="GO:0051539">
    <property type="term" value="F:4 iron, 4 sulfur cluster binding"/>
    <property type="evidence" value="ECO:0007669"/>
    <property type="project" value="UniProtKB-KW"/>
</dbReference>
<dbReference type="GO" id="GO:0008409">
    <property type="term" value="F:5'-3' exonuclease activity"/>
    <property type="evidence" value="ECO:0007669"/>
    <property type="project" value="UniProtKB-UniRule"/>
</dbReference>
<dbReference type="GO" id="GO:0005524">
    <property type="term" value="F:ATP binding"/>
    <property type="evidence" value="ECO:0007669"/>
    <property type="project" value="UniProtKB-UniRule"/>
</dbReference>
<dbReference type="GO" id="GO:0003690">
    <property type="term" value="F:double-stranded DNA binding"/>
    <property type="evidence" value="ECO:0007669"/>
    <property type="project" value="UniProtKB-UniRule"/>
</dbReference>
<dbReference type="GO" id="GO:0004386">
    <property type="term" value="F:helicase activity"/>
    <property type="evidence" value="ECO:0007669"/>
    <property type="project" value="UniProtKB-KW"/>
</dbReference>
<dbReference type="GO" id="GO:0046872">
    <property type="term" value="F:metal ion binding"/>
    <property type="evidence" value="ECO:0007669"/>
    <property type="project" value="UniProtKB-KW"/>
</dbReference>
<dbReference type="GO" id="GO:0000724">
    <property type="term" value="P:double-strand break repair via homologous recombination"/>
    <property type="evidence" value="ECO:0007669"/>
    <property type="project" value="UniProtKB-UniRule"/>
</dbReference>
<dbReference type="FunFam" id="3.90.320.10:FF:000006">
    <property type="entry name" value="ATP-dependent helicase/deoxyribonuclease subunit B"/>
    <property type="match status" value="1"/>
</dbReference>
<dbReference type="Gene3D" id="6.10.140.1030">
    <property type="match status" value="1"/>
</dbReference>
<dbReference type="Gene3D" id="3.40.50.300">
    <property type="entry name" value="P-loop containing nucleotide triphosphate hydrolases"/>
    <property type="match status" value="3"/>
</dbReference>
<dbReference type="HAMAP" id="MF_01452">
    <property type="entry name" value="AddB_type1"/>
    <property type="match status" value="1"/>
</dbReference>
<dbReference type="InterPro" id="IPR049035">
    <property type="entry name" value="ADDB_N"/>
</dbReference>
<dbReference type="InterPro" id="IPR014140">
    <property type="entry name" value="DNA_helicase_suAddB"/>
</dbReference>
<dbReference type="InterPro" id="IPR014017">
    <property type="entry name" value="DNA_helicase_UvrD-like_C"/>
</dbReference>
<dbReference type="InterPro" id="IPR027417">
    <property type="entry name" value="P-loop_NTPase"/>
</dbReference>
<dbReference type="InterPro" id="IPR038726">
    <property type="entry name" value="PDDEXK_AddAB-type"/>
</dbReference>
<dbReference type="NCBIfam" id="TIGR02773">
    <property type="entry name" value="addB_Gpos"/>
    <property type="match status" value="1"/>
</dbReference>
<dbReference type="PANTHER" id="PTHR30591">
    <property type="entry name" value="RECBCD ENZYME SUBUNIT RECC"/>
    <property type="match status" value="1"/>
</dbReference>
<dbReference type="PANTHER" id="PTHR30591:SF1">
    <property type="entry name" value="RECBCD ENZYME SUBUNIT RECC"/>
    <property type="match status" value="1"/>
</dbReference>
<dbReference type="Pfam" id="PF21445">
    <property type="entry name" value="ADDB_N"/>
    <property type="match status" value="1"/>
</dbReference>
<dbReference type="Pfam" id="PF12705">
    <property type="entry name" value="PDDEXK_1"/>
    <property type="match status" value="1"/>
</dbReference>
<dbReference type="Pfam" id="PF13361">
    <property type="entry name" value="UvrD_C"/>
    <property type="match status" value="1"/>
</dbReference>
<dbReference type="SUPFAM" id="SSF52540">
    <property type="entry name" value="P-loop containing nucleoside triphosphate hydrolases"/>
    <property type="match status" value="1"/>
</dbReference>
<dbReference type="PROSITE" id="PS51198">
    <property type="entry name" value="UVRD_HELICASE_ATP_BIND"/>
    <property type="match status" value="1"/>
</dbReference>
<dbReference type="PROSITE" id="PS51217">
    <property type="entry name" value="UVRD_HELICASE_CTER"/>
    <property type="match status" value="1"/>
</dbReference>
<accession>Q929A8</accession>
<gene>
    <name evidence="1" type="primary">addB</name>
    <name type="ordered locus">lin2369</name>
</gene>
<proteinExistence type="inferred from homology"/>
<reference key="1">
    <citation type="journal article" date="2001" name="Science">
        <title>Comparative genomics of Listeria species.</title>
        <authorList>
            <person name="Glaser P."/>
            <person name="Frangeul L."/>
            <person name="Buchrieser C."/>
            <person name="Rusniok C."/>
            <person name="Amend A."/>
            <person name="Baquero F."/>
            <person name="Berche P."/>
            <person name="Bloecker H."/>
            <person name="Brandt P."/>
            <person name="Chakraborty T."/>
            <person name="Charbit A."/>
            <person name="Chetouani F."/>
            <person name="Couve E."/>
            <person name="de Daruvar A."/>
            <person name="Dehoux P."/>
            <person name="Domann E."/>
            <person name="Dominguez-Bernal G."/>
            <person name="Duchaud E."/>
            <person name="Durant L."/>
            <person name="Dussurget O."/>
            <person name="Entian K.-D."/>
            <person name="Fsihi H."/>
            <person name="Garcia-del Portillo F."/>
            <person name="Garrido P."/>
            <person name="Gautier L."/>
            <person name="Goebel W."/>
            <person name="Gomez-Lopez N."/>
            <person name="Hain T."/>
            <person name="Hauf J."/>
            <person name="Jackson D."/>
            <person name="Jones L.-M."/>
            <person name="Kaerst U."/>
            <person name="Kreft J."/>
            <person name="Kuhn M."/>
            <person name="Kunst F."/>
            <person name="Kurapkat G."/>
            <person name="Madueno E."/>
            <person name="Maitournam A."/>
            <person name="Mata Vicente J."/>
            <person name="Ng E."/>
            <person name="Nedjari H."/>
            <person name="Nordsiek G."/>
            <person name="Novella S."/>
            <person name="de Pablos B."/>
            <person name="Perez-Diaz J.-C."/>
            <person name="Purcell R."/>
            <person name="Remmel B."/>
            <person name="Rose M."/>
            <person name="Schlueter T."/>
            <person name="Simoes N."/>
            <person name="Tierrez A."/>
            <person name="Vazquez-Boland J.-A."/>
            <person name="Voss H."/>
            <person name="Wehland J."/>
            <person name="Cossart P."/>
        </authorList>
    </citation>
    <scope>NUCLEOTIDE SEQUENCE [LARGE SCALE GENOMIC DNA]</scope>
    <source>
        <strain>ATCC BAA-680 / CLIP 11262</strain>
    </source>
</reference>
<name>ADDB_LISIN</name>
<keyword id="KW-0004">4Fe-4S</keyword>
<keyword id="KW-0067">ATP-binding</keyword>
<keyword id="KW-0227">DNA damage</keyword>
<keyword id="KW-0234">DNA repair</keyword>
<keyword id="KW-0238">DNA-binding</keyword>
<keyword id="KW-0269">Exonuclease</keyword>
<keyword id="KW-0347">Helicase</keyword>
<keyword id="KW-0378">Hydrolase</keyword>
<keyword id="KW-0408">Iron</keyword>
<keyword id="KW-0411">Iron-sulfur</keyword>
<keyword id="KW-0479">Metal-binding</keyword>
<keyword id="KW-0540">Nuclease</keyword>
<keyword id="KW-0547">Nucleotide-binding</keyword>
<comment type="function">
    <text evidence="1">The heterodimer acts as both an ATP-dependent DNA helicase and an ATP-dependent, dual-direction single-stranded exonuclease. Recognizes the chi site generating a DNA molecule suitable for the initiation of homologous recombination. The AddB subunit has 5' -&gt; 3' nuclease activity but not helicase activity.</text>
</comment>
<comment type="cofactor">
    <cofactor evidence="1">
        <name>Mg(2+)</name>
        <dbReference type="ChEBI" id="CHEBI:18420"/>
    </cofactor>
</comment>
<comment type="cofactor">
    <cofactor evidence="1">
        <name>[4Fe-4S] cluster</name>
        <dbReference type="ChEBI" id="CHEBI:49883"/>
    </cofactor>
    <text evidence="1">Binds 1 [4Fe-4S] cluster.</text>
</comment>
<comment type="subunit">
    <text evidence="1">Heterodimer of AddA and AddB.</text>
</comment>
<comment type="miscellaneous">
    <text evidence="1">Despite having conserved helicase domains, this subunit does not have helicase activity.</text>
</comment>
<comment type="similarity">
    <text evidence="1">Belongs to the helicase family. AddB/RexB type 1 subfamily.</text>
</comment>
<organism>
    <name type="scientific">Listeria innocua serovar 6a (strain ATCC BAA-680 / CLIP 11262)</name>
    <dbReference type="NCBI Taxonomy" id="272626"/>
    <lineage>
        <taxon>Bacteria</taxon>
        <taxon>Bacillati</taxon>
        <taxon>Bacillota</taxon>
        <taxon>Bacilli</taxon>
        <taxon>Bacillales</taxon>
        <taxon>Listeriaceae</taxon>
        <taxon>Listeria</taxon>
    </lineage>
</organism>
<sequence>MTLQIIAGKAGTGKTTHLMDEVGEKIKKTSKTYIFIVPDQMTFQMETSFLNKQNLAGMLGTQIFSFSRLAWKILQETGGLSKTFLSQTGIEMVIRKAALDQKDKLKIFSRATSKKGFYSELAKLFKEMKQEEISVDELEKSAANLSTSVSSKVHDISLIYQKYEELLAGKFLENEDYLRLLADKIIESDYLNQTEIIIDGFTSFSKQELTVIEKLMQKCDKVTVSLTLNVPEIHKGLEDFSMFKASTEAYFALLEMAKLNKIQVEPEKILLENKRANSDSLAFLANAWGDNKYSSYEGGANDLTIHQANNRRAEMEGVAREIRQLALNGYRYRDIAILTRNIGDYDILCETVMESFDIPIFIDKKRAMAKHPFIEFIRSSIDAILFNWKYEPIFQAVKTEFFFDVAENATIMRRKADILENYVLENGIQNKWKWEKEGDWIYRKIRGLSTNVLPQTDEELATQSVINEMRNLIVEPLSTLENNITKAKTGIEFAMALYHYLEQVKAVEHLESWRQVAEENGYLELAREHEQAWSSISELLDEFVEVLGEEELDVNSFSEIITTGLDALEFSLLPPSLDQVVLADMENAKLLNMKVIFAIGMNDGVMPLRQKDKGILSDQDRDSLRVENSNLKPSAKNNIGEEDLLAYKIMSLPSDKLFLSYPAADEEGKVLSESNYLRKIKGQFKNLNESVYLTDPSLLNDKEQSSYIRSKQATLGLLTSQLQMYKRGYPLSNVWWDAYNSYFEDSKESEAAKQVLSSLYYENKTKPLQETTAKNLFGENIHASVSRMEKFFSCEFQHFAQYGLKLEERAHYKLQAVDMGEIFHGAMEWISAELKRTNRDWGNLTEEECRQMAKLAMTFLAPKIQHEILLSSKRMEYIQYKLLQIITRATTVLNEQAKSSAFRPIGLEVDFGLKGDIPPLKIPLQSDSELLLQGRIDRIDAAEQDDRTFLRIIDYKSSSHDLALTEVYYGLALQMLTYLDIVVTNAQKMIGKTAEPAGVLYFHMHNQYVQAEKELSDEAIARELQKSSKMKGLILSDPVAVSLMDTNLEKGKSSNIIPAEIKQNGELSARSRTATKAEFDKMRRFVRQKYQEAGNKILDGAVSINPYKLKEKTPCQFCGFRSFCGFDPSLASNQYRHLTNEKTETILTKMDIEGGTQ</sequence>